<accession>B4F769</accession>
<proteinExistence type="evidence at transcript level"/>
<name>SMAL1_RAT</name>
<evidence type="ECO:0000250" key="1"/>
<evidence type="ECO:0000250" key="2">
    <source>
        <dbReference type="UniProtKB" id="Q9NZC9"/>
    </source>
</evidence>
<evidence type="ECO:0000255" key="3"/>
<evidence type="ECO:0000255" key="4">
    <source>
        <dbReference type="PROSITE-ProRule" id="PRU00541"/>
    </source>
</evidence>
<evidence type="ECO:0000255" key="5">
    <source>
        <dbReference type="PROSITE-ProRule" id="PRU00542"/>
    </source>
</evidence>
<evidence type="ECO:0000255" key="6">
    <source>
        <dbReference type="PROSITE-ProRule" id="PRU00800"/>
    </source>
</evidence>
<evidence type="ECO:0000256" key="7">
    <source>
        <dbReference type="SAM" id="MobiDB-lite"/>
    </source>
</evidence>
<dbReference type="EC" id="3.6.4.-" evidence="2"/>
<dbReference type="EMBL" id="CH474004">
    <property type="protein sequence ID" value="EDL75309.1"/>
    <property type="molecule type" value="Genomic_DNA"/>
</dbReference>
<dbReference type="EMBL" id="BC168154">
    <property type="protein sequence ID" value="AAI68154.1"/>
    <property type="molecule type" value="mRNA"/>
</dbReference>
<dbReference type="RefSeq" id="NP_001101692.1">
    <property type="nucleotide sequence ID" value="NM_001108222.1"/>
</dbReference>
<dbReference type="RefSeq" id="XP_006245274.1">
    <property type="nucleotide sequence ID" value="XM_006245212.3"/>
</dbReference>
<dbReference type="RefSeq" id="XP_006245275.1">
    <property type="nucleotide sequence ID" value="XM_006245213.3"/>
</dbReference>
<dbReference type="RefSeq" id="XP_008765457.1">
    <property type="nucleotide sequence ID" value="XM_008767235.3"/>
</dbReference>
<dbReference type="RefSeq" id="XP_017451963.1">
    <property type="nucleotide sequence ID" value="XM_017596474.3"/>
</dbReference>
<dbReference type="SMR" id="B4F769"/>
<dbReference type="BioGRID" id="261356">
    <property type="interactions" value="1"/>
</dbReference>
<dbReference type="FunCoup" id="B4F769">
    <property type="interactions" value="3564"/>
</dbReference>
<dbReference type="STRING" id="10116.ENSRNOP00000022459"/>
<dbReference type="PhosphoSitePlus" id="B4F769"/>
<dbReference type="PaxDb" id="10116-ENSRNOP00000022459"/>
<dbReference type="PeptideAtlas" id="B4F769"/>
<dbReference type="Ensembl" id="ENSRNOT00000022459.6">
    <property type="protein sequence ID" value="ENSRNOP00000022459.4"/>
    <property type="gene ID" value="ENSRNOG00000016503.9"/>
</dbReference>
<dbReference type="GeneID" id="316477"/>
<dbReference type="KEGG" id="rno:316477"/>
<dbReference type="UCSC" id="RGD:1306134">
    <property type="organism name" value="rat"/>
</dbReference>
<dbReference type="AGR" id="RGD:1306134"/>
<dbReference type="CTD" id="50485"/>
<dbReference type="RGD" id="1306134">
    <property type="gene designation" value="Smarcal1"/>
</dbReference>
<dbReference type="eggNOG" id="KOG1000">
    <property type="taxonomic scope" value="Eukaryota"/>
</dbReference>
<dbReference type="GeneTree" id="ENSGT00940000157608"/>
<dbReference type="HOGENOM" id="CLU_000315_33_1_1"/>
<dbReference type="InParanoid" id="B4F769"/>
<dbReference type="OMA" id="KCVPHAE"/>
<dbReference type="OrthoDB" id="37275at9989"/>
<dbReference type="PhylomeDB" id="B4F769"/>
<dbReference type="TreeFam" id="TF106474"/>
<dbReference type="PRO" id="PR:B4F769"/>
<dbReference type="Proteomes" id="UP000002494">
    <property type="component" value="Chromosome 9"/>
</dbReference>
<dbReference type="Proteomes" id="UP000234681">
    <property type="component" value="Chromosome 9"/>
</dbReference>
<dbReference type="Bgee" id="ENSRNOG00000016503">
    <property type="expression patterns" value="Expressed in skeletal muscle tissue and 20 other cell types or tissues"/>
</dbReference>
<dbReference type="GO" id="GO:0005662">
    <property type="term" value="C:DNA replication factor A complex"/>
    <property type="evidence" value="ECO:0000266"/>
    <property type="project" value="RGD"/>
</dbReference>
<dbReference type="GO" id="GO:0043596">
    <property type="term" value="C:nuclear replication fork"/>
    <property type="evidence" value="ECO:0000318"/>
    <property type="project" value="GO_Central"/>
</dbReference>
<dbReference type="GO" id="GO:0005654">
    <property type="term" value="C:nucleoplasm"/>
    <property type="evidence" value="ECO:0007669"/>
    <property type="project" value="Ensembl"/>
</dbReference>
<dbReference type="GO" id="GO:0005634">
    <property type="term" value="C:nucleus"/>
    <property type="evidence" value="ECO:0000250"/>
    <property type="project" value="UniProtKB"/>
</dbReference>
<dbReference type="GO" id="GO:0035861">
    <property type="term" value="C:site of double-strand break"/>
    <property type="evidence" value="ECO:0000250"/>
    <property type="project" value="UniProtKB"/>
</dbReference>
<dbReference type="GO" id="GO:0005524">
    <property type="term" value="F:ATP binding"/>
    <property type="evidence" value="ECO:0007669"/>
    <property type="project" value="UniProtKB-KW"/>
</dbReference>
<dbReference type="GO" id="GO:0008094">
    <property type="term" value="F:ATP-dependent activity, acting on DNA"/>
    <property type="evidence" value="ECO:0000266"/>
    <property type="project" value="RGD"/>
</dbReference>
<dbReference type="GO" id="GO:0036310">
    <property type="term" value="F:ATP-dependent DNA/DNA annealing activity"/>
    <property type="evidence" value="ECO:0000250"/>
    <property type="project" value="UniProtKB"/>
</dbReference>
<dbReference type="GO" id="GO:0004386">
    <property type="term" value="F:helicase activity"/>
    <property type="evidence" value="ECO:0007669"/>
    <property type="project" value="UniProtKB-KW"/>
</dbReference>
<dbReference type="GO" id="GO:0016787">
    <property type="term" value="F:hydrolase activity"/>
    <property type="evidence" value="ECO:0007669"/>
    <property type="project" value="UniProtKB-KW"/>
</dbReference>
<dbReference type="GO" id="GO:0006974">
    <property type="term" value="P:DNA damage response"/>
    <property type="evidence" value="ECO:0000250"/>
    <property type="project" value="UniProtKB"/>
</dbReference>
<dbReference type="GO" id="GO:0006281">
    <property type="term" value="P:DNA repair"/>
    <property type="evidence" value="ECO:0000318"/>
    <property type="project" value="GO_Central"/>
</dbReference>
<dbReference type="GO" id="GO:0006303">
    <property type="term" value="P:double-strand break repair via nonhomologous end joining"/>
    <property type="evidence" value="ECO:0000266"/>
    <property type="project" value="RGD"/>
</dbReference>
<dbReference type="GO" id="GO:0006357">
    <property type="term" value="P:regulation of transcription by RNA polymerase II"/>
    <property type="evidence" value="ECO:0000250"/>
    <property type="project" value="UniProtKB"/>
</dbReference>
<dbReference type="GO" id="GO:0031297">
    <property type="term" value="P:replication fork processing"/>
    <property type="evidence" value="ECO:0000250"/>
    <property type="project" value="UniProtKB"/>
</dbReference>
<dbReference type="CDD" id="cd18010">
    <property type="entry name" value="DEXHc_HARP_SMARCAL1"/>
    <property type="match status" value="1"/>
</dbReference>
<dbReference type="CDD" id="cd18793">
    <property type="entry name" value="SF2_C_SNF"/>
    <property type="match status" value="1"/>
</dbReference>
<dbReference type="FunFam" id="3.40.50.300:FF:001036">
    <property type="entry name" value="SWI/SNF related, matrix associated, actin dependent regulator of chromatin, subfamily a like 1"/>
    <property type="match status" value="1"/>
</dbReference>
<dbReference type="FunFam" id="3.40.50.10810:FF:000026">
    <property type="entry name" value="SWI/SNF related, matrix associated, actin dependent regulator of chromatin, subfamily a-like 1"/>
    <property type="match status" value="1"/>
</dbReference>
<dbReference type="Gene3D" id="3.40.50.300">
    <property type="entry name" value="P-loop containing nucleotide triphosphate hydrolases"/>
    <property type="match status" value="1"/>
</dbReference>
<dbReference type="Gene3D" id="3.40.50.10810">
    <property type="entry name" value="Tandem AAA-ATPase domain"/>
    <property type="match status" value="1"/>
</dbReference>
<dbReference type="InterPro" id="IPR010003">
    <property type="entry name" value="HARP_dom"/>
</dbReference>
<dbReference type="InterPro" id="IPR014001">
    <property type="entry name" value="Helicase_ATP-bd"/>
</dbReference>
<dbReference type="InterPro" id="IPR001650">
    <property type="entry name" value="Helicase_C-like"/>
</dbReference>
<dbReference type="InterPro" id="IPR027417">
    <property type="entry name" value="P-loop_NTPase"/>
</dbReference>
<dbReference type="InterPro" id="IPR038718">
    <property type="entry name" value="SNF2-like_sf"/>
</dbReference>
<dbReference type="InterPro" id="IPR049730">
    <property type="entry name" value="SNF2/RAD54-like_C"/>
</dbReference>
<dbReference type="InterPro" id="IPR000330">
    <property type="entry name" value="SNF2_N"/>
</dbReference>
<dbReference type="PANTHER" id="PTHR45766">
    <property type="entry name" value="DNA ANNEALING HELICASE AND ENDONUCLEASE ZRANB3 FAMILY MEMBER"/>
    <property type="match status" value="1"/>
</dbReference>
<dbReference type="PANTHER" id="PTHR45766:SF6">
    <property type="entry name" value="SWI_SNF-RELATED MATRIX-ASSOCIATED ACTIN-DEPENDENT REGULATOR OF CHROMATIN SUBFAMILY A-LIKE PROTEIN 1"/>
    <property type="match status" value="1"/>
</dbReference>
<dbReference type="Pfam" id="PF07443">
    <property type="entry name" value="HARP"/>
    <property type="match status" value="2"/>
</dbReference>
<dbReference type="Pfam" id="PF00271">
    <property type="entry name" value="Helicase_C"/>
    <property type="match status" value="1"/>
</dbReference>
<dbReference type="Pfam" id="PF00176">
    <property type="entry name" value="SNF2-rel_dom"/>
    <property type="match status" value="1"/>
</dbReference>
<dbReference type="SMART" id="SM00487">
    <property type="entry name" value="DEXDc"/>
    <property type="match status" value="1"/>
</dbReference>
<dbReference type="SMART" id="SM00490">
    <property type="entry name" value="HELICc"/>
    <property type="match status" value="1"/>
</dbReference>
<dbReference type="SUPFAM" id="SSF52540">
    <property type="entry name" value="P-loop containing nucleoside triphosphate hydrolases"/>
    <property type="match status" value="2"/>
</dbReference>
<dbReference type="PROSITE" id="PS51467">
    <property type="entry name" value="HARP"/>
    <property type="match status" value="2"/>
</dbReference>
<dbReference type="PROSITE" id="PS51192">
    <property type="entry name" value="HELICASE_ATP_BIND_1"/>
    <property type="match status" value="1"/>
</dbReference>
<dbReference type="PROSITE" id="PS51194">
    <property type="entry name" value="HELICASE_CTER"/>
    <property type="match status" value="1"/>
</dbReference>
<reference key="1">
    <citation type="submission" date="2005-07" db="EMBL/GenBank/DDBJ databases">
        <authorList>
            <person name="Mural R.J."/>
            <person name="Adams M.D."/>
            <person name="Myers E.W."/>
            <person name="Smith H.O."/>
            <person name="Venter J.C."/>
        </authorList>
    </citation>
    <scope>NUCLEOTIDE SEQUENCE [LARGE SCALE GENOMIC DNA]</scope>
</reference>
<reference key="2">
    <citation type="journal article" date="2004" name="Genome Res.">
        <title>The status, quality, and expansion of the NIH full-length cDNA project: the Mammalian Gene Collection (MGC).</title>
        <authorList>
            <consortium name="The MGC Project Team"/>
        </authorList>
    </citation>
    <scope>NUCLEOTIDE SEQUENCE [LARGE SCALE MRNA]</scope>
    <source>
        <tissue>Brain</tissue>
    </source>
</reference>
<comment type="function">
    <text evidence="2">ATP-dependent annealing helicase that binds selectively to fork DNA relative to ssDNA or dsDNA and catalyzes the rewinding of the stably unwound DNA. Rewinds single-stranded DNA bubbles that are stably bound by replication protein A (RPA). Acts throughout the genome to reanneal stably unwound DNA, performing the opposite reaction of many enzymes, such as helicases and polymerases, that unwind DNA. May play an important role in DNA damage response by acting at stalled replication forks.</text>
</comment>
<comment type="catalytic activity">
    <reaction evidence="2">
        <text>ATP + H2O = ADP + phosphate + H(+)</text>
        <dbReference type="Rhea" id="RHEA:13065"/>
        <dbReference type="ChEBI" id="CHEBI:15377"/>
        <dbReference type="ChEBI" id="CHEBI:15378"/>
        <dbReference type="ChEBI" id="CHEBI:30616"/>
        <dbReference type="ChEBI" id="CHEBI:43474"/>
        <dbReference type="ChEBI" id="CHEBI:456216"/>
    </reaction>
    <physiologicalReaction direction="left-to-right" evidence="2">
        <dbReference type="Rhea" id="RHEA:13066"/>
    </physiologicalReaction>
</comment>
<comment type="subunit">
    <text evidence="1">Interacts with RPA2; the interaction is direct and mediates the recruitment by the RPA complex of SMARCAL1 to sites of DNA damage.</text>
</comment>
<comment type="subcellular location">
    <subcellularLocation>
        <location evidence="1">Nucleus</location>
    </subcellularLocation>
    <text evidence="1">Recruited to damaged DNA regions.</text>
</comment>
<comment type="PTM">
    <text evidence="1">DNA damage-regulated phosphorylation by kinases that may include ATM, ATR and PRKDC.</text>
</comment>
<comment type="similarity">
    <text evidence="6">Belongs to the SNF2/RAD54 helicase family. SMARCAL1 subfamily.</text>
</comment>
<comment type="caution">
    <text evidence="2">Like other proteins within the SNF2 family, do not possess helicase activity but instead has ATP-dependent annealing activity.</text>
</comment>
<protein>
    <recommendedName>
        <fullName>SWI/SNF-related matrix-associated actin-dependent regulator of chromatin subfamily A-like protein 1</fullName>
        <ecNumber evidence="2">3.6.4.-</ecNumber>
    </recommendedName>
    <alternativeName>
        <fullName>HepA-related protein</fullName>
    </alternativeName>
    <alternativeName>
        <fullName>Sucrose nonfermenting protein 2-like 1</fullName>
    </alternativeName>
</protein>
<feature type="initiator methionine" description="Removed" evidence="2">
    <location>
        <position position="1"/>
    </location>
</feature>
<feature type="chain" id="PRO_0000361532" description="SWI/SNF-related matrix-associated actin-dependent regulator of chromatin subfamily A-like protein 1">
    <location>
        <begin position="2"/>
        <end position="910"/>
    </location>
</feature>
<feature type="domain" description="HARP 1" evidence="6">
    <location>
        <begin position="198"/>
        <end position="268"/>
    </location>
</feature>
<feature type="domain" description="HARP 2" evidence="6">
    <location>
        <begin position="284"/>
        <end position="355"/>
    </location>
</feature>
<feature type="domain" description="Helicase ATP-binding" evidence="4">
    <location>
        <begin position="402"/>
        <end position="557"/>
    </location>
</feature>
<feature type="domain" description="Helicase C-terminal" evidence="5">
    <location>
        <begin position="672"/>
        <end position="825"/>
    </location>
</feature>
<feature type="region of interest" description="Disordered" evidence="7">
    <location>
        <begin position="1"/>
        <end position="170"/>
    </location>
</feature>
<feature type="region of interest" description="Mediates interaction with RPA2" evidence="1">
    <location>
        <begin position="2"/>
        <end position="30"/>
    </location>
</feature>
<feature type="region of interest" description="Mediates interaction with RPA2" evidence="2">
    <location>
        <begin position="5"/>
        <end position="30"/>
    </location>
</feature>
<feature type="region of interest" description="Disordered" evidence="7">
    <location>
        <begin position="865"/>
        <end position="890"/>
    </location>
</feature>
<feature type="coiled-coil region" evidence="3">
    <location>
        <begin position="3"/>
        <end position="28"/>
    </location>
</feature>
<feature type="short sequence motif" description="DESH box">
    <location>
        <begin position="506"/>
        <end position="509"/>
    </location>
</feature>
<feature type="short sequence motif" description="Nuclear localization signal" evidence="2">
    <location>
        <begin position="601"/>
        <end position="618"/>
    </location>
</feature>
<feature type="compositionally biased region" description="Basic and acidic residues" evidence="7">
    <location>
        <begin position="7"/>
        <end position="29"/>
    </location>
</feature>
<feature type="compositionally biased region" description="Polar residues" evidence="7">
    <location>
        <begin position="32"/>
        <end position="54"/>
    </location>
</feature>
<feature type="compositionally biased region" description="Polar residues" evidence="7">
    <location>
        <begin position="70"/>
        <end position="95"/>
    </location>
</feature>
<feature type="compositionally biased region" description="Basic and acidic residues" evidence="7">
    <location>
        <begin position="97"/>
        <end position="107"/>
    </location>
</feature>
<feature type="compositionally biased region" description="Polar residues" evidence="7">
    <location>
        <begin position="120"/>
        <end position="131"/>
    </location>
</feature>
<feature type="compositionally biased region" description="Basic and acidic residues" evidence="7">
    <location>
        <begin position="150"/>
        <end position="160"/>
    </location>
</feature>
<feature type="compositionally biased region" description="Low complexity" evidence="7">
    <location>
        <begin position="865"/>
        <end position="875"/>
    </location>
</feature>
<feature type="binding site" evidence="4">
    <location>
        <begin position="415"/>
        <end position="422"/>
    </location>
    <ligand>
        <name>ATP</name>
        <dbReference type="ChEBI" id="CHEBI:30616"/>
    </ligand>
</feature>
<feature type="modified residue" description="N-acetylserine" evidence="2">
    <location>
        <position position="2"/>
    </location>
</feature>
<feature type="modified residue" description="Phosphoserine" evidence="2">
    <location>
        <position position="117"/>
    </location>
</feature>
<feature type="modified residue" description="Phosphoserine" evidence="2">
    <location>
        <position position="164"/>
    </location>
</feature>
<sequence length="910" mass="101212">MSLPLTEEQRKKIEENRQKALARRAEKLWAEQPQSTASGSSAARPSQCKQNSLLNLPAEPSKPEGHATISKGQNLNNSLPAAQRPHSSPCFQPSTAEEAKGLWKSEGKMSAACPNPSPPEVSNQQLLGSKSSEGHPQATQDTAASCPRPFPRDPKLEAKAGRPSTSGQSISDTFYALGEKTPKTDGRPAKALQTSPQKASCLRGMCLRTGDRFRVKIGYNKELIEVFKSLPSRRYDSFTKTWDFSMSDYRALMKAVERLSTVSLQPLEEVDGTGGQTSLPSAPSLTFVTGRCMLISRARFEVDIGYSEVVIALFKQMESRNYDPKTRKWNFLLEEHNKLIARSRELKQVQLDPLPKTLTLAFASQLEKTSLQSKADVPEADLSGVDAKLVSNLMPFQREGVSFAISKRGRLLLADDMGLGKTIQAICIAAFYRKEWPLLVVVPSSVRFTWEQAFLRWLPSLSPEDINVVVTGKGRLTAGLVNIVSFDLLSKLEKQLKTPFKVVIIDESHFLKNIKTARCRAAVPILKVAKRVILLSGTPAMSRPAELYTQIIAVKPTFFPQFHAFGLRYCDAKRLPWGWDYSGSSNLGELKLLLEEAVMLRRLKSDVLSQLPAKQRKMVVVNPGRISTRAKAALDAAAKEMTKDKTKQQQKEALLVFFNRTAEAKIPCVIEYILDLLESGREKFLVFAHHKVLLDAIAKELERKNVQHIRIDGSTPSADREDLCQQFQLSKGHTVAVLSITAANMGLTFSSADLVVFAELFWNPGVLIQAEDRVHRIGQTNSVGIHYLVAKGTADDYLWPLIQEKIKVLGEAGLSETNFSEMTEATDYLYKDPKQKTIYSLFQQSFEDDGNDMEFLEAAESFELGSTSGTSGNSSQELGDITDENALADSPPKKRRFEFFDNWDSFTSPF</sequence>
<organism>
    <name type="scientific">Rattus norvegicus</name>
    <name type="common">Rat</name>
    <dbReference type="NCBI Taxonomy" id="10116"/>
    <lineage>
        <taxon>Eukaryota</taxon>
        <taxon>Metazoa</taxon>
        <taxon>Chordata</taxon>
        <taxon>Craniata</taxon>
        <taxon>Vertebrata</taxon>
        <taxon>Euteleostomi</taxon>
        <taxon>Mammalia</taxon>
        <taxon>Eutheria</taxon>
        <taxon>Euarchontoglires</taxon>
        <taxon>Glires</taxon>
        <taxon>Rodentia</taxon>
        <taxon>Myomorpha</taxon>
        <taxon>Muroidea</taxon>
        <taxon>Muridae</taxon>
        <taxon>Murinae</taxon>
        <taxon>Rattus</taxon>
    </lineage>
</organism>
<gene>
    <name type="primary">Smarcal1</name>
    <name type="synonym">Harp</name>
</gene>
<keyword id="KW-0007">Acetylation</keyword>
<keyword id="KW-0175">Coiled coil</keyword>
<keyword id="KW-0378">Hydrolase</keyword>
<keyword id="KW-0539">Nucleus</keyword>
<keyword id="KW-0597">Phosphoprotein</keyword>
<keyword id="KW-1185">Reference proteome</keyword>
<keyword id="KW-0677">Repeat</keyword>